<proteinExistence type="inferred from homology"/>
<name>TAL_COPPD</name>
<gene>
    <name evidence="1" type="primary">tal</name>
    <name type="ordered locus">COPRO5265_1242</name>
</gene>
<sequence length="217" mass="23919">MKFFLDTAFVEEIRAAKEWGILDGVTTNPTLVAKTGKGFMEVVQDILNIVEGPVSIEVVAQDAQGMVEQAQQLRRLGEQVVIKIPATQEGIKAVKVLSQEGIPTNVTLIFQPLQALLAAKAGATYVSPFVGRLEDIGHDAMDLVFDIKNIFDNYGFETQIIVASIRHPKHVLDAARMGADICTVPFKVMEQLFKHALTDRGLEQFLADWSKVPGRPF</sequence>
<keyword id="KW-0963">Cytoplasm</keyword>
<keyword id="KW-0570">Pentose shunt</keyword>
<keyword id="KW-1185">Reference proteome</keyword>
<keyword id="KW-0704">Schiff base</keyword>
<keyword id="KW-0808">Transferase</keyword>
<dbReference type="EC" id="2.2.1.2" evidence="1"/>
<dbReference type="EMBL" id="CP001145">
    <property type="protein sequence ID" value="ACI16881.1"/>
    <property type="molecule type" value="Genomic_DNA"/>
</dbReference>
<dbReference type="RefSeq" id="WP_012543533.1">
    <property type="nucleotide sequence ID" value="NC_011295.1"/>
</dbReference>
<dbReference type="SMR" id="B5Y9V1"/>
<dbReference type="STRING" id="309798.COPRO5265_1242"/>
<dbReference type="KEGG" id="cpo:COPRO5265_1242"/>
<dbReference type="eggNOG" id="COG0176">
    <property type="taxonomic scope" value="Bacteria"/>
</dbReference>
<dbReference type="HOGENOM" id="CLU_079764_0_0_9"/>
<dbReference type="OrthoDB" id="9807051at2"/>
<dbReference type="UniPathway" id="UPA00115">
    <property type="reaction ID" value="UER00414"/>
</dbReference>
<dbReference type="Proteomes" id="UP000001732">
    <property type="component" value="Chromosome"/>
</dbReference>
<dbReference type="GO" id="GO:0005737">
    <property type="term" value="C:cytoplasm"/>
    <property type="evidence" value="ECO:0007669"/>
    <property type="project" value="UniProtKB-SubCell"/>
</dbReference>
<dbReference type="GO" id="GO:0016832">
    <property type="term" value="F:aldehyde-lyase activity"/>
    <property type="evidence" value="ECO:0007669"/>
    <property type="project" value="InterPro"/>
</dbReference>
<dbReference type="GO" id="GO:0004801">
    <property type="term" value="F:transaldolase activity"/>
    <property type="evidence" value="ECO:0007669"/>
    <property type="project" value="UniProtKB-UniRule"/>
</dbReference>
<dbReference type="GO" id="GO:0005975">
    <property type="term" value="P:carbohydrate metabolic process"/>
    <property type="evidence" value="ECO:0007669"/>
    <property type="project" value="InterPro"/>
</dbReference>
<dbReference type="GO" id="GO:0006098">
    <property type="term" value="P:pentose-phosphate shunt"/>
    <property type="evidence" value="ECO:0007669"/>
    <property type="project" value="UniProtKB-UniRule"/>
</dbReference>
<dbReference type="CDD" id="cd00956">
    <property type="entry name" value="Transaldolase_FSA"/>
    <property type="match status" value="1"/>
</dbReference>
<dbReference type="FunFam" id="3.20.20.70:FF:000018">
    <property type="entry name" value="Probable transaldolase"/>
    <property type="match status" value="1"/>
</dbReference>
<dbReference type="Gene3D" id="3.20.20.70">
    <property type="entry name" value="Aldolase class I"/>
    <property type="match status" value="1"/>
</dbReference>
<dbReference type="HAMAP" id="MF_00494">
    <property type="entry name" value="Transaldolase_3b"/>
    <property type="match status" value="1"/>
</dbReference>
<dbReference type="InterPro" id="IPR013785">
    <property type="entry name" value="Aldolase_TIM"/>
</dbReference>
<dbReference type="InterPro" id="IPR001585">
    <property type="entry name" value="TAL/FSA"/>
</dbReference>
<dbReference type="InterPro" id="IPR022999">
    <property type="entry name" value="Transaldolase_3B"/>
</dbReference>
<dbReference type="InterPro" id="IPR004731">
    <property type="entry name" value="Transaldolase_3B/F6P_aldolase"/>
</dbReference>
<dbReference type="InterPro" id="IPR018225">
    <property type="entry name" value="Transaldolase_AS"/>
</dbReference>
<dbReference type="InterPro" id="IPR033919">
    <property type="entry name" value="TSA/FSA_arc/bac"/>
</dbReference>
<dbReference type="NCBIfam" id="TIGR00875">
    <property type="entry name" value="fsa_talC_mipB"/>
    <property type="match status" value="1"/>
</dbReference>
<dbReference type="PANTHER" id="PTHR10683:SF40">
    <property type="entry name" value="FRUCTOSE-6-PHOSPHATE ALDOLASE 1-RELATED"/>
    <property type="match status" value="1"/>
</dbReference>
<dbReference type="PANTHER" id="PTHR10683">
    <property type="entry name" value="TRANSALDOLASE"/>
    <property type="match status" value="1"/>
</dbReference>
<dbReference type="Pfam" id="PF00923">
    <property type="entry name" value="TAL_FSA"/>
    <property type="match status" value="1"/>
</dbReference>
<dbReference type="SUPFAM" id="SSF51569">
    <property type="entry name" value="Aldolase"/>
    <property type="match status" value="1"/>
</dbReference>
<dbReference type="PROSITE" id="PS01054">
    <property type="entry name" value="TRANSALDOLASE_1"/>
    <property type="match status" value="1"/>
</dbReference>
<dbReference type="PROSITE" id="PS00958">
    <property type="entry name" value="TRANSALDOLASE_2"/>
    <property type="match status" value="1"/>
</dbReference>
<protein>
    <recommendedName>
        <fullName evidence="1">Probable transaldolase</fullName>
        <ecNumber evidence="1">2.2.1.2</ecNumber>
    </recommendedName>
</protein>
<organism>
    <name type="scientific">Coprothermobacter proteolyticus (strain ATCC 35245 / DSM 5265 / OCM 4 / BT)</name>
    <dbReference type="NCBI Taxonomy" id="309798"/>
    <lineage>
        <taxon>Bacteria</taxon>
        <taxon>Pseudomonadati</taxon>
        <taxon>Coprothermobacterota</taxon>
        <taxon>Coprothermobacteria</taxon>
        <taxon>Coprothermobacterales</taxon>
        <taxon>Coprothermobacteraceae</taxon>
        <taxon>Coprothermobacter</taxon>
    </lineage>
</organism>
<comment type="function">
    <text evidence="1">Transaldolase is important for the balance of metabolites in the pentose-phosphate pathway.</text>
</comment>
<comment type="catalytic activity">
    <reaction evidence="1">
        <text>D-sedoheptulose 7-phosphate + D-glyceraldehyde 3-phosphate = D-erythrose 4-phosphate + beta-D-fructose 6-phosphate</text>
        <dbReference type="Rhea" id="RHEA:17053"/>
        <dbReference type="ChEBI" id="CHEBI:16897"/>
        <dbReference type="ChEBI" id="CHEBI:57483"/>
        <dbReference type="ChEBI" id="CHEBI:57634"/>
        <dbReference type="ChEBI" id="CHEBI:59776"/>
        <dbReference type="EC" id="2.2.1.2"/>
    </reaction>
</comment>
<comment type="pathway">
    <text evidence="1">Carbohydrate degradation; pentose phosphate pathway; D-glyceraldehyde 3-phosphate and beta-D-fructose 6-phosphate from D-ribose 5-phosphate and D-xylulose 5-phosphate (non-oxidative stage): step 2/3.</text>
</comment>
<comment type="subcellular location">
    <subcellularLocation>
        <location evidence="1">Cytoplasm</location>
    </subcellularLocation>
</comment>
<comment type="similarity">
    <text evidence="1">Belongs to the transaldolase family. Type 3B subfamily.</text>
</comment>
<reference key="1">
    <citation type="submission" date="2008-08" db="EMBL/GenBank/DDBJ databases">
        <title>The complete genome sequence of Coprothermobacter proteolyticus strain ATCC 5245 / DSM 5265 / BT.</title>
        <authorList>
            <person name="Dodson R.J."/>
            <person name="Durkin A.S."/>
            <person name="Wu M."/>
            <person name="Eisen J."/>
            <person name="Sutton G."/>
        </authorList>
    </citation>
    <scope>NUCLEOTIDE SEQUENCE [LARGE SCALE GENOMIC DNA]</scope>
    <source>
        <strain>ATCC 35245 / DSM 5265 / OCM 4 / BT</strain>
    </source>
</reference>
<feature type="chain" id="PRO_1000126303" description="Probable transaldolase">
    <location>
        <begin position="1"/>
        <end position="217"/>
    </location>
</feature>
<feature type="active site" description="Schiff-base intermediate with substrate" evidence="1">
    <location>
        <position position="83"/>
    </location>
</feature>
<accession>B5Y9V1</accession>
<evidence type="ECO:0000255" key="1">
    <source>
        <dbReference type="HAMAP-Rule" id="MF_00494"/>
    </source>
</evidence>